<name>KTHY_SALG2</name>
<keyword id="KW-0067">ATP-binding</keyword>
<keyword id="KW-0418">Kinase</keyword>
<keyword id="KW-0545">Nucleotide biosynthesis</keyword>
<keyword id="KW-0547">Nucleotide-binding</keyword>
<keyword id="KW-0808">Transferase</keyword>
<dbReference type="EC" id="2.7.4.9" evidence="1"/>
<dbReference type="EMBL" id="AM933173">
    <property type="protein sequence ID" value="CAR37773.1"/>
    <property type="molecule type" value="Genomic_DNA"/>
</dbReference>
<dbReference type="RefSeq" id="WP_000535396.1">
    <property type="nucleotide sequence ID" value="NC_011274.1"/>
</dbReference>
<dbReference type="SMR" id="B5RBA2"/>
<dbReference type="KEGG" id="seg:SG1922"/>
<dbReference type="HOGENOM" id="CLU_049131_0_1_6"/>
<dbReference type="Proteomes" id="UP000008321">
    <property type="component" value="Chromosome"/>
</dbReference>
<dbReference type="GO" id="GO:0005829">
    <property type="term" value="C:cytosol"/>
    <property type="evidence" value="ECO:0007669"/>
    <property type="project" value="TreeGrafter"/>
</dbReference>
<dbReference type="GO" id="GO:0005524">
    <property type="term" value="F:ATP binding"/>
    <property type="evidence" value="ECO:0007669"/>
    <property type="project" value="UniProtKB-UniRule"/>
</dbReference>
<dbReference type="GO" id="GO:0004798">
    <property type="term" value="F:dTMP kinase activity"/>
    <property type="evidence" value="ECO:0007669"/>
    <property type="project" value="UniProtKB-UniRule"/>
</dbReference>
<dbReference type="GO" id="GO:0006233">
    <property type="term" value="P:dTDP biosynthetic process"/>
    <property type="evidence" value="ECO:0007669"/>
    <property type="project" value="InterPro"/>
</dbReference>
<dbReference type="GO" id="GO:0006235">
    <property type="term" value="P:dTTP biosynthetic process"/>
    <property type="evidence" value="ECO:0007669"/>
    <property type="project" value="UniProtKB-UniRule"/>
</dbReference>
<dbReference type="GO" id="GO:0006227">
    <property type="term" value="P:dUDP biosynthetic process"/>
    <property type="evidence" value="ECO:0007669"/>
    <property type="project" value="TreeGrafter"/>
</dbReference>
<dbReference type="CDD" id="cd01672">
    <property type="entry name" value="TMPK"/>
    <property type="match status" value="1"/>
</dbReference>
<dbReference type="FunFam" id="3.40.50.300:FF:000321">
    <property type="entry name" value="Thymidylate kinase"/>
    <property type="match status" value="1"/>
</dbReference>
<dbReference type="Gene3D" id="3.40.50.300">
    <property type="entry name" value="P-loop containing nucleotide triphosphate hydrolases"/>
    <property type="match status" value="1"/>
</dbReference>
<dbReference type="HAMAP" id="MF_00165">
    <property type="entry name" value="Thymidylate_kinase"/>
    <property type="match status" value="1"/>
</dbReference>
<dbReference type="InterPro" id="IPR027417">
    <property type="entry name" value="P-loop_NTPase"/>
</dbReference>
<dbReference type="InterPro" id="IPR039430">
    <property type="entry name" value="Thymidylate_kin-like_dom"/>
</dbReference>
<dbReference type="InterPro" id="IPR018095">
    <property type="entry name" value="Thymidylate_kin_CS"/>
</dbReference>
<dbReference type="InterPro" id="IPR018094">
    <property type="entry name" value="Thymidylate_kinase"/>
</dbReference>
<dbReference type="NCBIfam" id="TIGR00041">
    <property type="entry name" value="DTMP_kinase"/>
    <property type="match status" value="1"/>
</dbReference>
<dbReference type="PANTHER" id="PTHR10344">
    <property type="entry name" value="THYMIDYLATE KINASE"/>
    <property type="match status" value="1"/>
</dbReference>
<dbReference type="PANTHER" id="PTHR10344:SF4">
    <property type="entry name" value="UMP-CMP KINASE 2, MITOCHONDRIAL"/>
    <property type="match status" value="1"/>
</dbReference>
<dbReference type="Pfam" id="PF02223">
    <property type="entry name" value="Thymidylate_kin"/>
    <property type="match status" value="1"/>
</dbReference>
<dbReference type="SUPFAM" id="SSF52540">
    <property type="entry name" value="P-loop containing nucleoside triphosphate hydrolases"/>
    <property type="match status" value="1"/>
</dbReference>
<dbReference type="PROSITE" id="PS01331">
    <property type="entry name" value="THYMIDYLATE_KINASE"/>
    <property type="match status" value="1"/>
</dbReference>
<comment type="function">
    <text evidence="1">Phosphorylation of dTMP to form dTDP in both de novo and salvage pathways of dTTP synthesis.</text>
</comment>
<comment type="catalytic activity">
    <reaction evidence="1">
        <text>dTMP + ATP = dTDP + ADP</text>
        <dbReference type="Rhea" id="RHEA:13517"/>
        <dbReference type="ChEBI" id="CHEBI:30616"/>
        <dbReference type="ChEBI" id="CHEBI:58369"/>
        <dbReference type="ChEBI" id="CHEBI:63528"/>
        <dbReference type="ChEBI" id="CHEBI:456216"/>
        <dbReference type="EC" id="2.7.4.9"/>
    </reaction>
</comment>
<comment type="similarity">
    <text evidence="1">Belongs to the thymidylate kinase family.</text>
</comment>
<organism>
    <name type="scientific">Salmonella gallinarum (strain 287/91 / NCTC 13346)</name>
    <dbReference type="NCBI Taxonomy" id="550538"/>
    <lineage>
        <taxon>Bacteria</taxon>
        <taxon>Pseudomonadati</taxon>
        <taxon>Pseudomonadota</taxon>
        <taxon>Gammaproteobacteria</taxon>
        <taxon>Enterobacterales</taxon>
        <taxon>Enterobacteriaceae</taxon>
        <taxon>Salmonella</taxon>
    </lineage>
</organism>
<feature type="chain" id="PRO_1000097425" description="Thymidylate kinase">
    <location>
        <begin position="1"/>
        <end position="213"/>
    </location>
</feature>
<feature type="binding site" evidence="1">
    <location>
        <begin position="10"/>
        <end position="17"/>
    </location>
    <ligand>
        <name>ATP</name>
        <dbReference type="ChEBI" id="CHEBI:30616"/>
    </ligand>
</feature>
<sequence length="213" mass="23738">MGSNYIVIEGLEGAGKTTARDVVVETLEQLGIRNMIFTREPGGTQLAEKLRSLVLDIRSVGDEVITDKAEVLMFYAARVQLVETVIKPALAQGIWVIGDRHDLSTQAYQGGGRGIDQTMLATLRDAVLGDFRPDLTLYLDVTPEVGLKRARARGDLDRIEQESFDFFNRTRARYLELAAQDSRIRTIDATQPLDAVMRDIRATVTKWVQEQAA</sequence>
<protein>
    <recommendedName>
        <fullName evidence="1">Thymidylate kinase</fullName>
        <ecNumber evidence="1">2.7.4.9</ecNumber>
    </recommendedName>
    <alternativeName>
        <fullName evidence="1">dTMP kinase</fullName>
    </alternativeName>
</protein>
<evidence type="ECO:0000255" key="1">
    <source>
        <dbReference type="HAMAP-Rule" id="MF_00165"/>
    </source>
</evidence>
<reference key="1">
    <citation type="journal article" date="2008" name="Genome Res.">
        <title>Comparative genome analysis of Salmonella enteritidis PT4 and Salmonella gallinarum 287/91 provides insights into evolutionary and host adaptation pathways.</title>
        <authorList>
            <person name="Thomson N.R."/>
            <person name="Clayton D.J."/>
            <person name="Windhorst D."/>
            <person name="Vernikos G."/>
            <person name="Davidson S."/>
            <person name="Churcher C."/>
            <person name="Quail M.A."/>
            <person name="Stevens M."/>
            <person name="Jones M.A."/>
            <person name="Watson M."/>
            <person name="Barron A."/>
            <person name="Layton A."/>
            <person name="Pickard D."/>
            <person name="Kingsley R.A."/>
            <person name="Bignell A."/>
            <person name="Clark L."/>
            <person name="Harris B."/>
            <person name="Ormond D."/>
            <person name="Abdellah Z."/>
            <person name="Brooks K."/>
            <person name="Cherevach I."/>
            <person name="Chillingworth T."/>
            <person name="Woodward J."/>
            <person name="Norberczak H."/>
            <person name="Lord A."/>
            <person name="Arrowsmith C."/>
            <person name="Jagels K."/>
            <person name="Moule S."/>
            <person name="Mungall K."/>
            <person name="Saunders M."/>
            <person name="Whitehead S."/>
            <person name="Chabalgoity J.A."/>
            <person name="Maskell D."/>
            <person name="Humphreys T."/>
            <person name="Roberts M."/>
            <person name="Barrow P.A."/>
            <person name="Dougan G."/>
            <person name="Parkhill J."/>
        </authorList>
    </citation>
    <scope>NUCLEOTIDE SEQUENCE [LARGE SCALE GENOMIC DNA]</scope>
    <source>
        <strain>287/91 / NCTC 13346</strain>
    </source>
</reference>
<accession>B5RBA2</accession>
<gene>
    <name evidence="1" type="primary">tmk</name>
    <name type="ordered locus">SG1922</name>
</gene>
<proteinExistence type="inferred from homology"/>